<proteinExistence type="evidence at transcript level"/>
<dbReference type="EMBL" id="D10218">
    <property type="protein sequence ID" value="BAA01070.1"/>
    <property type="molecule type" value="mRNA"/>
</dbReference>
<dbReference type="GO" id="GO:0030430">
    <property type="term" value="C:host cell cytoplasm"/>
    <property type="evidence" value="ECO:0007669"/>
    <property type="project" value="UniProtKB-SubCell"/>
</dbReference>
<dbReference type="GO" id="GO:0019028">
    <property type="term" value="C:viral capsid"/>
    <property type="evidence" value="ECO:0007669"/>
    <property type="project" value="UniProtKB-KW"/>
</dbReference>
<dbReference type="GO" id="GO:0003723">
    <property type="term" value="F:RNA binding"/>
    <property type="evidence" value="ECO:0007669"/>
    <property type="project" value="UniProtKB-KW"/>
</dbReference>
<dbReference type="InterPro" id="IPR009873">
    <property type="entry name" value="Phytoreo_S7"/>
</dbReference>
<dbReference type="Pfam" id="PF07236">
    <property type="entry name" value="Phytoreo_S7"/>
    <property type="match status" value="1"/>
</dbReference>
<comment type="function">
    <text evidence="1">Probable component of the transcriptional machinery present in the inner capsid. Displays dsRNA binding activity and may play an important role in the sorting of viral RNA and virion assembly. Together with the RNA-directed RNA polymerase P1 and capping enzyme P5, forms an transcriptional complex positioned near the channels situated at each of the five-fold vertices of the core (By similarity).</text>
</comment>
<comment type="subcellular location">
    <subcellularLocation>
        <location evidence="1">Virion</location>
    </subcellularLocation>
    <subcellularLocation>
        <location evidence="1">Host cytoplasm</location>
    </subcellularLocation>
    <text evidence="1">Located inside the inner capsid. Found in the interior of spherical cytoplasmic structures, called virus factories, that appear early after infection and are the site of viral replication and packaging.</text>
</comment>
<comment type="similarity">
    <text evidence="2">Belongs to the phytoreovirus protein P7 family.</text>
</comment>
<feature type="chain" id="PRO_0000222790" description="Protein P7">
    <location>
        <begin position="1"/>
        <end position="506"/>
    </location>
</feature>
<feature type="region of interest" description="RNA-binding" evidence="1">
    <location>
        <begin position="128"/>
        <end position="249"/>
    </location>
</feature>
<feature type="region of interest" description="RNA-binding" evidence="1">
    <location>
        <begin position="325"/>
        <end position="355"/>
    </location>
</feature>
<reference key="1">
    <citation type="journal article" date="1993" name="Arch. Virol.">
        <title>In vitro translation of rice dwarf phytoreovirus genome segments S4 to S10.</title>
        <authorList>
            <person name="Suzuki N."/>
        </authorList>
    </citation>
    <scope>NUCLEOTIDE SEQUENCE [MRNA]</scope>
</reference>
<organismHost>
    <name type="scientific">Alopecurus aequalis</name>
    <dbReference type="NCBI Taxonomy" id="114194"/>
</organismHost>
<organismHost>
    <name type="scientific">Echinochloa crus-galli</name>
    <name type="common">Barnyard grass</name>
    <name type="synonym">Panicum crus-galli</name>
    <dbReference type="NCBI Taxonomy" id="90397"/>
</organismHost>
<organismHost>
    <name type="scientific">Nephotettix cincticeps</name>
    <name type="common">Green rice leafhopper</name>
    <name type="synonym">Selenocephalus cincticeps</name>
    <dbReference type="NCBI Taxonomy" id="94400"/>
</organismHost>
<organismHost>
    <name type="scientific">Oryza sativa</name>
    <name type="common">Rice</name>
    <dbReference type="NCBI Taxonomy" id="4530"/>
</organismHost>
<organismHost>
    <name type="scientific">Paspalum</name>
    <dbReference type="NCBI Taxonomy" id="147271"/>
</organismHost>
<sequence length="506" mass="55287">MSAIVGLCLLSEKVVLSRSLTDEVSKLYKLNRGNVKEPRKYATERMSTQSKPVALQVPVSTIVLDYKDEDFIKQNPTYSAMDIIGSPSNTAPQTAFQSIMPSLSALFNTPFIQGAFRHRIISSMGPEISYLVMVIGPPSGFMDTPNVSSAQSSVHTVSNADVDLNDIIAINSTMAKSTKLVSASTLQAMLVNDVYDRCMDLDGILLSQALPFFRNYVNVQSKGSLPPAVAACLNTPIKELFSMGSGKREPLTLEFRKDNEGQCLGIVLPKGHEGDTLSSRYPAVFINESEPFSDKERSELSELKRTDSDAYEKLYSETISKHVSDGSYGNRVIISHKMSRLSNGGVKIIGRFKISDFNTVKKNLSSRSGEVDSAKEQWEALSGNGLVTDSNISMLHDKILDTITSNKPGVVLRDGNKKSENIVVCFKNGFPNKKHSLLQLTKNGISVVSLDELTDAGILVESTGPDRVRRSPKALANKLSSFKGRKVTLDVDNMSTEALIQKLSAL</sequence>
<accession>Q85448</accession>
<keyword id="KW-0167">Capsid protein</keyword>
<keyword id="KW-1035">Host cytoplasm</keyword>
<keyword id="KW-0694">RNA-binding</keyword>
<keyword id="KW-0946">Virion</keyword>
<name>P7_RDVA</name>
<evidence type="ECO:0000250" key="1"/>
<evidence type="ECO:0000305" key="2"/>
<organism>
    <name type="scientific">Rice dwarf virus (isolate Akita)</name>
    <name type="common">RDV</name>
    <dbReference type="NCBI Taxonomy" id="142803"/>
    <lineage>
        <taxon>Viruses</taxon>
        <taxon>Riboviria</taxon>
        <taxon>Orthornavirae</taxon>
        <taxon>Duplornaviricota</taxon>
        <taxon>Resentoviricetes</taxon>
        <taxon>Reovirales</taxon>
        <taxon>Sedoreoviridae</taxon>
        <taxon>Phytoreovirus</taxon>
        <taxon>Rice dwarf virus</taxon>
    </lineage>
</organism>
<protein>
    <recommendedName>
        <fullName>Protein P7</fullName>
    </recommendedName>
    <alternativeName>
        <fullName>55 kDa core protein</fullName>
    </alternativeName>
</protein>